<gene>
    <name evidence="3" type="primary">MCPH1</name>
</gene>
<dbReference type="EMBL" id="AY742816">
    <property type="protein sequence ID" value="AAW55574.1"/>
    <property type="molecule type" value="mRNA"/>
</dbReference>
<dbReference type="RefSeq" id="NP_001306456.1">
    <property type="nucleotide sequence ID" value="NM_001319527.1"/>
</dbReference>
<dbReference type="SMR" id="Q5IFK1"/>
<dbReference type="STRING" id="9541.ENSMFAP00000023871"/>
<dbReference type="eggNOG" id="KOG4362">
    <property type="taxonomic scope" value="Eukaryota"/>
</dbReference>
<dbReference type="Proteomes" id="UP000233100">
    <property type="component" value="Unplaced"/>
</dbReference>
<dbReference type="GO" id="GO:0005813">
    <property type="term" value="C:centrosome"/>
    <property type="evidence" value="ECO:0007669"/>
    <property type="project" value="UniProtKB-SubCell"/>
</dbReference>
<dbReference type="GO" id="GO:0005737">
    <property type="term" value="C:cytoplasm"/>
    <property type="evidence" value="ECO:0007669"/>
    <property type="project" value="UniProtKB-KW"/>
</dbReference>
<dbReference type="GO" id="GO:0021987">
    <property type="term" value="P:cerebral cortex development"/>
    <property type="evidence" value="ECO:0007669"/>
    <property type="project" value="InterPro"/>
</dbReference>
<dbReference type="GO" id="GO:0000278">
    <property type="term" value="P:mitotic cell cycle"/>
    <property type="evidence" value="ECO:0007669"/>
    <property type="project" value="TreeGrafter"/>
</dbReference>
<dbReference type="CDD" id="cd17716">
    <property type="entry name" value="BRCT_microcephalin_rpt1"/>
    <property type="match status" value="1"/>
</dbReference>
<dbReference type="CDD" id="cd17736">
    <property type="entry name" value="BRCT_microcephalin_rpt2"/>
    <property type="match status" value="1"/>
</dbReference>
<dbReference type="CDD" id="cd17751">
    <property type="entry name" value="BRCT_microcephalin_rpt3"/>
    <property type="match status" value="1"/>
</dbReference>
<dbReference type="FunFam" id="3.40.50.10190:FF:000047">
    <property type="entry name" value="Microcephalin"/>
    <property type="match status" value="1"/>
</dbReference>
<dbReference type="FunFam" id="3.40.50.10190:FF:000053">
    <property type="entry name" value="Microcephalin"/>
    <property type="match status" value="1"/>
</dbReference>
<dbReference type="FunFam" id="3.40.50.10190:FF:000055">
    <property type="entry name" value="Microcephalin"/>
    <property type="match status" value="1"/>
</dbReference>
<dbReference type="Gene3D" id="3.40.50.10190">
    <property type="entry name" value="BRCT domain"/>
    <property type="match status" value="3"/>
</dbReference>
<dbReference type="InterPro" id="IPR001357">
    <property type="entry name" value="BRCT_dom"/>
</dbReference>
<dbReference type="InterPro" id="IPR036420">
    <property type="entry name" value="BRCT_dom_sf"/>
</dbReference>
<dbReference type="InterPro" id="IPR022047">
    <property type="entry name" value="Microcephalin-like"/>
</dbReference>
<dbReference type="InterPro" id="IPR029504">
    <property type="entry name" value="Microcephalin_mammal"/>
</dbReference>
<dbReference type="PANTHER" id="PTHR14625">
    <property type="entry name" value="MICROCEPHALIN"/>
    <property type="match status" value="1"/>
</dbReference>
<dbReference type="PANTHER" id="PTHR14625:SF3">
    <property type="entry name" value="MICROCEPHALIN"/>
    <property type="match status" value="1"/>
</dbReference>
<dbReference type="Pfam" id="PF12258">
    <property type="entry name" value="Microcephalin"/>
    <property type="match status" value="1"/>
</dbReference>
<dbReference type="Pfam" id="PF12738">
    <property type="entry name" value="PTCB-BRCT"/>
    <property type="match status" value="1"/>
</dbReference>
<dbReference type="SMART" id="SM00292">
    <property type="entry name" value="BRCT"/>
    <property type="match status" value="3"/>
</dbReference>
<dbReference type="SUPFAM" id="SSF52113">
    <property type="entry name" value="BRCT domain"/>
    <property type="match status" value="3"/>
</dbReference>
<dbReference type="PROSITE" id="PS50172">
    <property type="entry name" value="BRCT"/>
    <property type="match status" value="3"/>
</dbReference>
<name>MCPH1_MACFA</name>
<reference key="1">
    <citation type="journal article" date="2004" name="Cell">
        <title>Accelerated evolution of nervous system genes in the origin of Homo sapiens.</title>
        <authorList>
            <person name="Dorus S."/>
            <person name="Vallender E.J."/>
            <person name="Evans P.D."/>
            <person name="Anderson J.R."/>
            <person name="Gilbert S.L."/>
            <person name="Mahowald M."/>
            <person name="Wyckoff G.J."/>
            <person name="Malcom C.M."/>
            <person name="Lahn B.T."/>
        </authorList>
    </citation>
    <scope>NUCLEOTIDE SEQUENCE [MRNA]</scope>
</reference>
<proteinExistence type="evidence at transcript level"/>
<keyword id="KW-0963">Cytoplasm</keyword>
<keyword id="KW-0206">Cytoskeleton</keyword>
<keyword id="KW-0597">Phosphoprotein</keyword>
<keyword id="KW-1185">Reference proteome</keyword>
<keyword id="KW-0677">Repeat</keyword>
<organism>
    <name type="scientific">Macaca fascicularis</name>
    <name type="common">Crab-eating macaque</name>
    <name type="synonym">Cynomolgus monkey</name>
    <dbReference type="NCBI Taxonomy" id="9541"/>
    <lineage>
        <taxon>Eukaryota</taxon>
        <taxon>Metazoa</taxon>
        <taxon>Chordata</taxon>
        <taxon>Craniata</taxon>
        <taxon>Vertebrata</taxon>
        <taxon>Euteleostomi</taxon>
        <taxon>Mammalia</taxon>
        <taxon>Eutheria</taxon>
        <taxon>Euarchontoglires</taxon>
        <taxon>Primates</taxon>
        <taxon>Haplorrhini</taxon>
        <taxon>Catarrhini</taxon>
        <taxon>Cercopithecidae</taxon>
        <taxon>Cercopithecinae</taxon>
        <taxon>Macaca</taxon>
    </lineage>
</organism>
<comment type="function">
    <text evidence="1">Implicated in chromosome condensation and DNA damage induced cellular responses. May play a role in neurogenesis and regulation of the size of the cerebral cortex (By similarity).</text>
</comment>
<comment type="subunit">
    <text evidence="1">Interacts with CDC27 and maybe other components of the APC/C complex. Interacts with histone variant H2AX under DNA damage conditions (By similarity).</text>
</comment>
<comment type="subcellular location">
    <subcellularLocation>
        <location evidence="1">Cytoplasm</location>
        <location evidence="1">Cytoskeleton</location>
        <location evidence="1">Microtubule organizing center</location>
        <location evidence="1">Centrosome</location>
    </subcellularLocation>
</comment>
<comment type="domain">
    <text evidence="1">BRCT domain 1 is required to prevent abnormal chromosome condensation. It binds directly to the SWI-SNF chromatin remodeling complex (By similarity).</text>
</comment>
<comment type="domain">
    <text evidence="1">BRCT domains 2 and 3 recognize phosphoserine/phosphothreonine marks on proteins with high selectivity, and mediate interaction with phosphorylated CDC27. They also mediate the dual recognition of phosphoserine and phosphotyrosine in the C-terminal tail of histone H2AX (By similarity).</text>
</comment>
<feature type="chain" id="PRO_0000096298" description="Microcephalin">
    <location>
        <begin position="1"/>
        <end position="842"/>
    </location>
</feature>
<feature type="domain" description="BRCT 1" evidence="4">
    <location>
        <begin position="1"/>
        <end position="93"/>
    </location>
</feature>
<feature type="domain" description="BRCT 2" evidence="4">
    <location>
        <begin position="647"/>
        <end position="737"/>
    </location>
</feature>
<feature type="domain" description="BRCT 3" evidence="4">
    <location>
        <begin position="758"/>
        <end position="840"/>
    </location>
</feature>
<feature type="region of interest" description="Disordered" evidence="5">
    <location>
        <begin position="346"/>
        <end position="375"/>
    </location>
</feature>
<feature type="region of interest" description="Disordered" evidence="5">
    <location>
        <begin position="418"/>
        <end position="443"/>
    </location>
</feature>
<feature type="region of interest" description="Disordered" evidence="5">
    <location>
        <begin position="563"/>
        <end position="624"/>
    </location>
</feature>
<feature type="compositionally biased region" description="Basic residues" evidence="5">
    <location>
        <begin position="346"/>
        <end position="359"/>
    </location>
</feature>
<feature type="compositionally biased region" description="Polar residues" evidence="5">
    <location>
        <begin position="434"/>
        <end position="443"/>
    </location>
</feature>
<feature type="compositionally biased region" description="Polar residues" evidence="5">
    <location>
        <begin position="566"/>
        <end position="582"/>
    </location>
</feature>
<feature type="compositionally biased region" description="Basic and acidic residues" evidence="5">
    <location>
        <begin position="586"/>
        <end position="608"/>
    </location>
</feature>
<feature type="modified residue" description="Phosphoserine" evidence="3">
    <location>
        <position position="279"/>
    </location>
</feature>
<feature type="modified residue" description="Phosphoserine" evidence="3">
    <location>
        <position position="287"/>
    </location>
</feature>
<feature type="modified residue" description="Phosphoserine" evidence="2">
    <location>
        <position position="296"/>
    </location>
</feature>
<feature type="modified residue" description="Phosphoserine" evidence="3">
    <location>
        <position position="333"/>
    </location>
</feature>
<feature type="modified residue" description="Phosphothreonine" evidence="3">
    <location>
        <position position="335"/>
    </location>
</feature>
<evidence type="ECO:0000250" key="1"/>
<evidence type="ECO:0000250" key="2">
    <source>
        <dbReference type="UniProtKB" id="Q7TT79"/>
    </source>
</evidence>
<evidence type="ECO:0000250" key="3">
    <source>
        <dbReference type="UniProtKB" id="Q8NEM0"/>
    </source>
</evidence>
<evidence type="ECO:0000255" key="4">
    <source>
        <dbReference type="PROSITE-ProRule" id="PRU00033"/>
    </source>
</evidence>
<evidence type="ECO:0000256" key="5">
    <source>
        <dbReference type="SAM" id="MobiDB-lite"/>
    </source>
</evidence>
<sequence length="842" mass="93530">MAAPILKDVVAYVEVWSSNGTENYSKTFTTQLVDMGAKVSKTFNKQVTHVIFKDGYQSTWDKARKRGVKLVSVLWVEKCRTAGAHIDESLFPAANTNEHLPSLIKKKRKCMQPKDFNFKTPENDKRFQKKFEKMAKELQRQKTSLDDDVPILLFESNGSLTYSPTIKINSSHHSAMEKRLQEMKEKRENLSPTSSQMIQQSHDNPSNSLCEAPLNISHDTLCSDESIAGGLHSSFDDLCGNSECGNQERKLGGSINDTKSDMCISSLVLKTNNTHLSPSFAHLDKSSPQKFLSNLSKEEINLQRNIVGKIVTPDQKQAAGMSQETFEEKYRLSPTLSSTKGHLLIHSRPRSSSVKRKRVSYGFHSPPKEKCKRKRSIRRSIMPRLQLCRSEGSLQCMAGPALEALGCGESSYDDYFSPDNLKERNSENLPPKSQLPSNPAQFSCRSLSKKERTSIFEMSDFSCVGKKPRTVDITSFTAKTICSPQKTASGEGCATFSCVTSEESSAPEETLRYCRQAGPQQKEDAWPEGNGFSYTIEDPSLPKGHDGDLTPFEGILEEVKEAVGLKSTQDKGTTSKISNSSEGEAPSEHEPRSVVDCNVERSAEEKENLPGGYSGSVKNRPTRRDVLDGSCDSFKDLIKPHEELKKSGKGKKPTRTLVMTSMPSEKQNVVIQVVDKLKGFSIARDVCETTTHVLSGKPLRTLNVLLGIARGCWVLSYDWVLWSLESGQWISEEPFELSNHFPAAPLCRRECHLSAGPYRGTLFADQPVMFVSPASSPPVAKLCELVHLCGGRVSQVPRQASIVIGPYSGKKKATVKYLSEKWVLDSITQHKVCASENYLLPQ</sequence>
<accession>Q5IFK1</accession>
<protein>
    <recommendedName>
        <fullName evidence="3">Microcephalin</fullName>
    </recommendedName>
</protein>